<feature type="signal peptide" evidence="1">
    <location>
        <begin position="1"/>
        <end position="29"/>
    </location>
</feature>
<feature type="chain" id="PRO_0000333067" description="N-acetylneuraminate epimerase">
    <location>
        <begin position="30"/>
        <end position="384"/>
    </location>
</feature>
<feature type="repeat" description="Kelch 1">
    <location>
        <begin position="51"/>
        <end position="95"/>
    </location>
</feature>
<feature type="repeat" description="Kelch 2">
    <location>
        <begin position="97"/>
        <end position="149"/>
    </location>
</feature>
<feature type="repeat" description="Kelch 3">
    <location>
        <begin position="151"/>
        <end position="184"/>
    </location>
</feature>
<feature type="repeat" description="Kelch 4">
    <location>
        <begin position="185"/>
        <end position="230"/>
    </location>
</feature>
<feature type="repeat" description="Kelch 5">
    <location>
        <begin position="233"/>
        <end position="282"/>
    </location>
</feature>
<feature type="repeat" description="Kelch 6">
    <location>
        <begin position="304"/>
        <end position="353"/>
    </location>
</feature>
<feature type="repeat" description="Kelch 7">
    <location>
        <begin position="355"/>
        <end position="384"/>
    </location>
</feature>
<feature type="active site" description="Proton acceptor" evidence="1">
    <location>
        <position position="239"/>
    </location>
</feature>
<gene>
    <name evidence="1" type="primary">nanM</name>
    <name type="ordered locus">STY1167</name>
    <name type="ordered locus">t1790</name>
</gene>
<organism>
    <name type="scientific">Salmonella typhi</name>
    <dbReference type="NCBI Taxonomy" id="90370"/>
    <lineage>
        <taxon>Bacteria</taxon>
        <taxon>Pseudomonadati</taxon>
        <taxon>Pseudomonadota</taxon>
        <taxon>Gammaproteobacteria</taxon>
        <taxon>Enterobacterales</taxon>
        <taxon>Enterobacteriaceae</taxon>
        <taxon>Salmonella</taxon>
    </lineage>
</organism>
<accession>Q8Z7N0</accession>
<accession>Q7C999</accession>
<evidence type="ECO:0000255" key="1">
    <source>
        <dbReference type="HAMAP-Rule" id="MF_01195"/>
    </source>
</evidence>
<dbReference type="EC" id="5.1.3.24" evidence="1"/>
<dbReference type="EMBL" id="AE014613">
    <property type="protein sequence ID" value="AAO69412.1"/>
    <property type="molecule type" value="Genomic_DNA"/>
</dbReference>
<dbReference type="EMBL" id="AL513382">
    <property type="protein sequence ID" value="CAD08255.1"/>
    <property type="molecule type" value="Genomic_DNA"/>
</dbReference>
<dbReference type="RefSeq" id="NP_455625.1">
    <property type="nucleotide sequence ID" value="NC_003198.1"/>
</dbReference>
<dbReference type="RefSeq" id="WP_000525766.1">
    <property type="nucleotide sequence ID" value="NZ_WSUR01000018.1"/>
</dbReference>
<dbReference type="SMR" id="Q8Z7N0"/>
<dbReference type="STRING" id="220341.gene:17585134"/>
<dbReference type="KEGG" id="stt:t1790"/>
<dbReference type="KEGG" id="sty:STY1167"/>
<dbReference type="PATRIC" id="fig|220341.7.peg.1167"/>
<dbReference type="eggNOG" id="COG3055">
    <property type="taxonomic scope" value="Bacteria"/>
</dbReference>
<dbReference type="HOGENOM" id="CLU_061535_0_0_6"/>
<dbReference type="OMA" id="FNGFFQD"/>
<dbReference type="OrthoDB" id="198899at2"/>
<dbReference type="Proteomes" id="UP000000541">
    <property type="component" value="Chromosome"/>
</dbReference>
<dbReference type="Proteomes" id="UP000002670">
    <property type="component" value="Chromosome"/>
</dbReference>
<dbReference type="GO" id="GO:0042597">
    <property type="term" value="C:periplasmic space"/>
    <property type="evidence" value="ECO:0007669"/>
    <property type="project" value="UniProtKB-SubCell"/>
</dbReference>
<dbReference type="GO" id="GO:0016857">
    <property type="term" value="F:racemase and epimerase activity, acting on carbohydrates and derivatives"/>
    <property type="evidence" value="ECO:0007669"/>
    <property type="project" value="UniProtKB-UniRule"/>
</dbReference>
<dbReference type="Gene3D" id="2.120.10.80">
    <property type="entry name" value="Kelch-type beta propeller"/>
    <property type="match status" value="2"/>
</dbReference>
<dbReference type="HAMAP" id="MF_01195">
    <property type="entry name" value="NanM"/>
    <property type="match status" value="1"/>
</dbReference>
<dbReference type="InterPro" id="IPR015915">
    <property type="entry name" value="Kelch-typ_b-propeller"/>
</dbReference>
<dbReference type="InterPro" id="IPR056734">
    <property type="entry name" value="NANM"/>
</dbReference>
<dbReference type="InterPro" id="IPR019936">
    <property type="entry name" value="NanM_proteobact"/>
</dbReference>
<dbReference type="NCBIfam" id="TIGR03547">
    <property type="entry name" value="muta_rot_YjhT"/>
    <property type="match status" value="1"/>
</dbReference>
<dbReference type="NCBIfam" id="NF010730">
    <property type="entry name" value="PRK14131.1"/>
    <property type="match status" value="1"/>
</dbReference>
<dbReference type="PANTHER" id="PTHR46093">
    <property type="entry name" value="ACYL-COA-BINDING DOMAIN-CONTAINING PROTEIN 5"/>
    <property type="match status" value="1"/>
</dbReference>
<dbReference type="PANTHER" id="PTHR46093:SF18">
    <property type="entry name" value="FIBRONECTIN TYPE-III DOMAIN-CONTAINING PROTEIN"/>
    <property type="match status" value="1"/>
</dbReference>
<dbReference type="Pfam" id="PF24996">
    <property type="entry name" value="NANM"/>
    <property type="match status" value="1"/>
</dbReference>
<dbReference type="SUPFAM" id="SSF117281">
    <property type="entry name" value="Kelch motif"/>
    <property type="match status" value="1"/>
</dbReference>
<comment type="function">
    <text evidence="1">Converts alpha-N-acetylneuranimic acid (Neu5Ac) to the beta-anomer, accelerating the equilibrium between the alpha- and beta-anomers. Probably facilitates sialidase-negative bacteria to compete successfully for limited amounts of extracellular Neu5Ac, which is likely taken up in the beta-anomer. In addition, the rapid removal of sialic acid from solution might be advantageous to the bacterium to damp down host responses.</text>
</comment>
<comment type="catalytic activity">
    <reaction evidence="1">
        <text>N-acetyl-alpha-neuraminate = N-acetyl-beta-neuraminate</text>
        <dbReference type="Rhea" id="RHEA:25233"/>
        <dbReference type="ChEBI" id="CHEBI:58705"/>
        <dbReference type="ChEBI" id="CHEBI:58770"/>
        <dbReference type="EC" id="5.1.3.24"/>
    </reaction>
</comment>
<comment type="subunit">
    <text evidence="1">Homodimer.</text>
</comment>
<comment type="subcellular location">
    <subcellularLocation>
        <location evidence="1">Periplasm</location>
    </subcellularLocation>
</comment>
<comment type="similarity">
    <text evidence="1">Belongs to the NanM family.</text>
</comment>
<reference key="1">
    <citation type="journal article" date="2001" name="Nature">
        <title>Complete genome sequence of a multiple drug resistant Salmonella enterica serovar Typhi CT18.</title>
        <authorList>
            <person name="Parkhill J."/>
            <person name="Dougan G."/>
            <person name="James K.D."/>
            <person name="Thomson N.R."/>
            <person name="Pickard D."/>
            <person name="Wain J."/>
            <person name="Churcher C.M."/>
            <person name="Mungall K.L."/>
            <person name="Bentley S.D."/>
            <person name="Holden M.T.G."/>
            <person name="Sebaihia M."/>
            <person name="Baker S."/>
            <person name="Basham D."/>
            <person name="Brooks K."/>
            <person name="Chillingworth T."/>
            <person name="Connerton P."/>
            <person name="Cronin A."/>
            <person name="Davis P."/>
            <person name="Davies R.M."/>
            <person name="Dowd L."/>
            <person name="White N."/>
            <person name="Farrar J."/>
            <person name="Feltwell T."/>
            <person name="Hamlin N."/>
            <person name="Haque A."/>
            <person name="Hien T.T."/>
            <person name="Holroyd S."/>
            <person name="Jagels K."/>
            <person name="Krogh A."/>
            <person name="Larsen T.S."/>
            <person name="Leather S."/>
            <person name="Moule S."/>
            <person name="O'Gaora P."/>
            <person name="Parry C."/>
            <person name="Quail M.A."/>
            <person name="Rutherford K.M."/>
            <person name="Simmonds M."/>
            <person name="Skelton J."/>
            <person name="Stevens K."/>
            <person name="Whitehead S."/>
            <person name="Barrell B.G."/>
        </authorList>
    </citation>
    <scope>NUCLEOTIDE SEQUENCE [LARGE SCALE GENOMIC DNA]</scope>
    <source>
        <strain>CT18</strain>
    </source>
</reference>
<reference key="2">
    <citation type="journal article" date="2003" name="J. Bacteriol.">
        <title>Comparative genomics of Salmonella enterica serovar Typhi strains Ty2 and CT18.</title>
        <authorList>
            <person name="Deng W."/>
            <person name="Liou S.-R."/>
            <person name="Plunkett G. III"/>
            <person name="Mayhew G.F."/>
            <person name="Rose D.J."/>
            <person name="Burland V."/>
            <person name="Kodoyianni V."/>
            <person name="Schwartz D.C."/>
            <person name="Blattner F.R."/>
        </authorList>
    </citation>
    <scope>NUCLEOTIDE SEQUENCE [LARGE SCALE GENOMIC DNA]</scope>
    <source>
        <strain>ATCC 700931 / Ty2</strain>
    </source>
</reference>
<sequence>MGMQMKNFKKMMTLMALCLSVAITTSGYATTLPDIPEPLKNGTGAIDNNGVIYVGLGTAGTSWYKIDLKKQHKDWERIKSFPGGAREQSVSVFLNDKLYVFGGVGKKNSESPLQVYSDVYKYSPVKNTWQKVDTISPVGLTGHTGVKLNETMVLITGGVNEHIFDKYFIDIAAADESEKNKVIYNYFNKPAKDYFFNKIVFIYNAKENTWKNAGELPGAGTAGSSSVMENNFLMLINGELKPGLRTDVIYRAMWDNDKLTWLKNSQLPPSPGEQQQEGLAGAFSGYSHGVLLVGGGANFPGAKQNYTNGKFYSHEGINKKWRDEVYGLINGHWQYMGKMKQPLGYGVSVSYGDEVFLIGGENAKGKPVSSVTSFTMRDGNLLIK</sequence>
<name>NANM_SALTI</name>
<protein>
    <recommendedName>
        <fullName evidence="1">N-acetylneuraminate epimerase</fullName>
        <ecNumber evidence="1">5.1.3.24</ecNumber>
    </recommendedName>
    <alternativeName>
        <fullName evidence="1">N-acetylneuraminate mutarotase</fullName>
        <shortName evidence="1">Neu5Ac mutarotase</shortName>
    </alternativeName>
    <alternativeName>
        <fullName evidence="1">Sialic acid epimerase</fullName>
    </alternativeName>
</protein>
<keyword id="KW-0119">Carbohydrate metabolism</keyword>
<keyword id="KW-0413">Isomerase</keyword>
<keyword id="KW-0880">Kelch repeat</keyword>
<keyword id="KW-0574">Periplasm</keyword>
<keyword id="KW-0677">Repeat</keyword>
<keyword id="KW-0732">Signal</keyword>
<proteinExistence type="inferred from homology"/>